<reference key="1">
    <citation type="journal article" date="2006" name="Proc. Natl. Acad. Sci. U.S.A.">
        <title>The complete genome of Rhodococcus sp. RHA1 provides insights into a catabolic powerhouse.</title>
        <authorList>
            <person name="McLeod M.P."/>
            <person name="Warren R.L."/>
            <person name="Hsiao W.W.L."/>
            <person name="Araki N."/>
            <person name="Myhre M."/>
            <person name="Fernandes C."/>
            <person name="Miyazawa D."/>
            <person name="Wong W."/>
            <person name="Lillquist A.L."/>
            <person name="Wang D."/>
            <person name="Dosanjh M."/>
            <person name="Hara H."/>
            <person name="Petrescu A."/>
            <person name="Morin R.D."/>
            <person name="Yang G."/>
            <person name="Stott J.M."/>
            <person name="Schein J.E."/>
            <person name="Shin H."/>
            <person name="Smailus D."/>
            <person name="Siddiqui A.S."/>
            <person name="Marra M.A."/>
            <person name="Jones S.J.M."/>
            <person name="Holt R."/>
            <person name="Brinkman F.S.L."/>
            <person name="Miyauchi K."/>
            <person name="Fukuda M."/>
            <person name="Davies J.E."/>
            <person name="Mohn W.W."/>
            <person name="Eltis L.D."/>
        </authorList>
    </citation>
    <scope>NUCLEOTIDE SEQUENCE [LARGE SCALE GENOMIC DNA]</scope>
    <source>
        <strain>RHA1</strain>
    </source>
</reference>
<evidence type="ECO:0000255" key="1">
    <source>
        <dbReference type="HAMAP-Rule" id="MF_01653"/>
    </source>
</evidence>
<protein>
    <recommendedName>
        <fullName evidence="1">2,3-dihydroxyphenylpropionate/2,3-dihydroxicinnamic acid 1,2-dioxygenase</fullName>
        <ecNumber evidence="1">1.13.11.16</ecNumber>
    </recommendedName>
    <alternativeName>
        <fullName evidence="1">3-carboxyethylcatechol 2,3-dioxygenase</fullName>
    </alternativeName>
</protein>
<dbReference type="EC" id="1.13.11.16" evidence="1"/>
<dbReference type="EMBL" id="CP000431">
    <property type="protein sequence ID" value="ABG92354.1"/>
    <property type="molecule type" value="Genomic_DNA"/>
</dbReference>
<dbReference type="RefSeq" id="WP_011593779.1">
    <property type="nucleotide sequence ID" value="NC_008268.1"/>
</dbReference>
<dbReference type="SMR" id="Q0SJD2"/>
<dbReference type="KEGG" id="rha:RHA1_ro00518"/>
<dbReference type="PATRIC" id="fig|101510.16.peg.548"/>
<dbReference type="eggNOG" id="COG3384">
    <property type="taxonomic scope" value="Bacteria"/>
</dbReference>
<dbReference type="HOGENOM" id="CLU_078149_0_0_11"/>
<dbReference type="OrthoDB" id="8673673at2"/>
<dbReference type="UniPathway" id="UPA00714"/>
<dbReference type="Proteomes" id="UP000008710">
    <property type="component" value="Chromosome"/>
</dbReference>
<dbReference type="GO" id="GO:0047070">
    <property type="term" value="F:3-carboxyethylcatechol 2,3-dioxygenase activity"/>
    <property type="evidence" value="ECO:0007669"/>
    <property type="project" value="UniProtKB-UniRule"/>
</dbReference>
<dbReference type="GO" id="GO:0008198">
    <property type="term" value="F:ferrous iron binding"/>
    <property type="evidence" value="ECO:0007669"/>
    <property type="project" value="InterPro"/>
</dbReference>
<dbReference type="GO" id="GO:0019380">
    <property type="term" value="P:3-phenylpropionate catabolic process"/>
    <property type="evidence" value="ECO:0007669"/>
    <property type="project" value="UniProtKB-UniRule"/>
</dbReference>
<dbReference type="CDD" id="cd07365">
    <property type="entry name" value="MhpB_like"/>
    <property type="match status" value="1"/>
</dbReference>
<dbReference type="Gene3D" id="3.40.830.10">
    <property type="entry name" value="LigB-like"/>
    <property type="match status" value="1"/>
</dbReference>
<dbReference type="HAMAP" id="MF_01653">
    <property type="entry name" value="MhpB"/>
    <property type="match status" value="1"/>
</dbReference>
<dbReference type="InterPro" id="IPR023789">
    <property type="entry name" value="DHPP/DHXA_dioxygenase"/>
</dbReference>
<dbReference type="InterPro" id="IPR004183">
    <property type="entry name" value="Xdiol_dOase_suB"/>
</dbReference>
<dbReference type="NCBIfam" id="NF009910">
    <property type="entry name" value="PRK13370.1-4"/>
    <property type="match status" value="1"/>
</dbReference>
<dbReference type="Pfam" id="PF02900">
    <property type="entry name" value="LigB"/>
    <property type="match status" value="1"/>
</dbReference>
<dbReference type="SUPFAM" id="SSF53213">
    <property type="entry name" value="LigB-like"/>
    <property type="match status" value="1"/>
</dbReference>
<proteinExistence type="inferred from homology"/>
<comment type="function">
    <text evidence="1">Catalyzes the non-heme iron(II)-dependent oxidative cleavage of 2,3-dihydroxyphenylpropionic acid and 2,3-dihydroxicinnamic acid into 2-hydroxy-6-ketononadienedioate and 2-hydroxy-6-ketononatrienedioate, respectively.</text>
</comment>
<comment type="catalytic activity">
    <reaction evidence="1">
        <text>3-(2,3-dihydroxyphenyl)propanoate + O2 = (2Z,4E)-2-hydroxy-6-oxonona-2,4-dienedioate + H(+)</text>
        <dbReference type="Rhea" id="RHEA:23840"/>
        <dbReference type="ChEBI" id="CHEBI:15378"/>
        <dbReference type="ChEBI" id="CHEBI:15379"/>
        <dbReference type="ChEBI" id="CHEBI:46951"/>
        <dbReference type="ChEBI" id="CHEBI:66887"/>
        <dbReference type="EC" id="1.13.11.16"/>
    </reaction>
</comment>
<comment type="catalytic activity">
    <reaction evidence="1">
        <text>(2E)-3-(2,3-dihydroxyphenyl)prop-2-enoate + O2 = (2Z,4E,7E)-2-hydroxy-6-oxonona-2,4,7-trienedioate + H(+)</text>
        <dbReference type="Rhea" id="RHEA:25054"/>
        <dbReference type="ChEBI" id="CHEBI:15378"/>
        <dbReference type="ChEBI" id="CHEBI:15379"/>
        <dbReference type="ChEBI" id="CHEBI:58642"/>
        <dbReference type="ChEBI" id="CHEBI:66888"/>
        <dbReference type="EC" id="1.13.11.16"/>
    </reaction>
</comment>
<comment type="cofactor">
    <cofactor evidence="1">
        <name>Fe(2+)</name>
        <dbReference type="ChEBI" id="CHEBI:29033"/>
    </cofactor>
</comment>
<comment type="pathway">
    <text evidence="1">Aromatic compound metabolism; 3-phenylpropanoate degradation.</text>
</comment>
<comment type="subunit">
    <text evidence="1">Homotetramer.</text>
</comment>
<comment type="similarity">
    <text evidence="1">Belongs to the LigB/MhpB extradiol dioxygenase family.</text>
</comment>
<feature type="chain" id="PRO_0000337668" description="2,3-dihydroxyphenylpropionate/2,3-dihydroxicinnamic acid 1,2-dioxygenase">
    <location>
        <begin position="1"/>
        <end position="314"/>
    </location>
</feature>
<feature type="active site" description="Proton donor" evidence="1">
    <location>
        <position position="115"/>
    </location>
</feature>
<feature type="active site" description="Proton acceptor" evidence="1">
    <location>
        <position position="179"/>
    </location>
</feature>
<keyword id="KW-0058">Aromatic hydrocarbons catabolism</keyword>
<keyword id="KW-0223">Dioxygenase</keyword>
<keyword id="KW-0408">Iron</keyword>
<keyword id="KW-0560">Oxidoreductase</keyword>
<sequence length="314" mass="33844">MPVALCTMSHSPLMGRNDPAQTVIDDVDAAFENARTFIADFAPDLIVIFAPDHYNGVYYDLMPPFCIGAAAQSVGDYGTESGPLNVDRDAAYTVAREVLASGVDVAFSERMHVDHGFAQALQLLVGSITAVPTVPIFINSVAEPLGPVSRVRLLGEAVGRAAANLDKRVLFVGSGGLSHDPPVPQFATAPTEVKEKLIDGRNPTEAERNAREQRVIDAGRDFAAGVATIAPLNPEWDRNLLDVLTSGEIEQIDSWTNEWFVEQAGHSSHEVRTWIAAYAAMSAAGKYRVTSTFYREIPEWIAGFGISTAVAVDE</sequence>
<gene>
    <name evidence="1" type="primary">mhpB</name>
    <name type="ordered locus">RHA1_ro00518</name>
</gene>
<organism>
    <name type="scientific">Rhodococcus jostii (strain RHA1)</name>
    <dbReference type="NCBI Taxonomy" id="101510"/>
    <lineage>
        <taxon>Bacteria</taxon>
        <taxon>Bacillati</taxon>
        <taxon>Actinomycetota</taxon>
        <taxon>Actinomycetes</taxon>
        <taxon>Mycobacteriales</taxon>
        <taxon>Nocardiaceae</taxon>
        <taxon>Rhodococcus</taxon>
    </lineage>
</organism>
<name>MHPB_RHOJR</name>
<accession>Q0SJD2</accession>